<dbReference type="EMBL" id="CP000800">
    <property type="protein sequence ID" value="ABV18561.1"/>
    <property type="molecule type" value="Genomic_DNA"/>
</dbReference>
<dbReference type="RefSeq" id="WP_000963143.1">
    <property type="nucleotide sequence ID" value="NC_009801.1"/>
</dbReference>
<dbReference type="SMR" id="A7ZQC8"/>
<dbReference type="GeneID" id="93779312"/>
<dbReference type="KEGG" id="ecw:EcE24377A_2983"/>
<dbReference type="HOGENOM" id="CLU_040469_3_2_6"/>
<dbReference type="Proteomes" id="UP000001122">
    <property type="component" value="Chromosome"/>
</dbReference>
<dbReference type="GO" id="GO:0005829">
    <property type="term" value="C:cytosol"/>
    <property type="evidence" value="ECO:0007669"/>
    <property type="project" value="TreeGrafter"/>
</dbReference>
<dbReference type="GO" id="GO:0005524">
    <property type="term" value="F:ATP binding"/>
    <property type="evidence" value="ECO:0007669"/>
    <property type="project" value="UniProtKB-UniRule"/>
</dbReference>
<dbReference type="GO" id="GO:0016887">
    <property type="term" value="F:ATP hydrolysis activity"/>
    <property type="evidence" value="ECO:0007669"/>
    <property type="project" value="InterPro"/>
</dbReference>
<dbReference type="GO" id="GO:0140664">
    <property type="term" value="F:ATP-dependent DNA damage sensor activity"/>
    <property type="evidence" value="ECO:0007669"/>
    <property type="project" value="InterPro"/>
</dbReference>
<dbReference type="GO" id="GO:0003684">
    <property type="term" value="F:damaged DNA binding"/>
    <property type="evidence" value="ECO:0007669"/>
    <property type="project" value="UniProtKB-UniRule"/>
</dbReference>
<dbReference type="GO" id="GO:0003697">
    <property type="term" value="F:single-stranded DNA binding"/>
    <property type="evidence" value="ECO:0007669"/>
    <property type="project" value="UniProtKB-UniRule"/>
</dbReference>
<dbReference type="GO" id="GO:0006310">
    <property type="term" value="P:DNA recombination"/>
    <property type="evidence" value="ECO:0007669"/>
    <property type="project" value="UniProtKB-UniRule"/>
</dbReference>
<dbReference type="GO" id="GO:0006281">
    <property type="term" value="P:DNA repair"/>
    <property type="evidence" value="ECO:0007669"/>
    <property type="project" value="UniProtKB-UniRule"/>
</dbReference>
<dbReference type="GO" id="GO:0009432">
    <property type="term" value="P:SOS response"/>
    <property type="evidence" value="ECO:0007669"/>
    <property type="project" value="UniProtKB-UniRule"/>
</dbReference>
<dbReference type="CDD" id="cd00983">
    <property type="entry name" value="RecA"/>
    <property type="match status" value="1"/>
</dbReference>
<dbReference type="FunFam" id="3.40.50.300:FF:000087">
    <property type="entry name" value="Recombinase RecA"/>
    <property type="match status" value="1"/>
</dbReference>
<dbReference type="Gene3D" id="3.40.50.300">
    <property type="entry name" value="P-loop containing nucleotide triphosphate hydrolases"/>
    <property type="match status" value="1"/>
</dbReference>
<dbReference type="HAMAP" id="MF_00268">
    <property type="entry name" value="RecA"/>
    <property type="match status" value="1"/>
</dbReference>
<dbReference type="InterPro" id="IPR003593">
    <property type="entry name" value="AAA+_ATPase"/>
</dbReference>
<dbReference type="InterPro" id="IPR013765">
    <property type="entry name" value="DNA_recomb/repair_RecA"/>
</dbReference>
<dbReference type="InterPro" id="IPR020584">
    <property type="entry name" value="DNA_recomb/repair_RecA_CS"/>
</dbReference>
<dbReference type="InterPro" id="IPR027417">
    <property type="entry name" value="P-loop_NTPase"/>
</dbReference>
<dbReference type="InterPro" id="IPR049261">
    <property type="entry name" value="RecA-like_C"/>
</dbReference>
<dbReference type="InterPro" id="IPR049428">
    <property type="entry name" value="RecA-like_N"/>
</dbReference>
<dbReference type="InterPro" id="IPR020588">
    <property type="entry name" value="RecA_ATP-bd"/>
</dbReference>
<dbReference type="InterPro" id="IPR023400">
    <property type="entry name" value="RecA_C_sf"/>
</dbReference>
<dbReference type="InterPro" id="IPR020587">
    <property type="entry name" value="RecA_monomer-monomer_interface"/>
</dbReference>
<dbReference type="NCBIfam" id="TIGR02012">
    <property type="entry name" value="tigrfam_recA"/>
    <property type="match status" value="1"/>
</dbReference>
<dbReference type="PANTHER" id="PTHR45900:SF1">
    <property type="entry name" value="MITOCHONDRIAL DNA REPAIR PROTEIN RECA HOMOLOG-RELATED"/>
    <property type="match status" value="1"/>
</dbReference>
<dbReference type="PANTHER" id="PTHR45900">
    <property type="entry name" value="RECA"/>
    <property type="match status" value="1"/>
</dbReference>
<dbReference type="Pfam" id="PF00154">
    <property type="entry name" value="RecA"/>
    <property type="match status" value="1"/>
</dbReference>
<dbReference type="Pfam" id="PF21096">
    <property type="entry name" value="RecA_C"/>
    <property type="match status" value="1"/>
</dbReference>
<dbReference type="PRINTS" id="PR00142">
    <property type="entry name" value="RECA"/>
</dbReference>
<dbReference type="SMART" id="SM00382">
    <property type="entry name" value="AAA"/>
    <property type="match status" value="1"/>
</dbReference>
<dbReference type="SUPFAM" id="SSF52540">
    <property type="entry name" value="P-loop containing nucleoside triphosphate hydrolases"/>
    <property type="match status" value="1"/>
</dbReference>
<dbReference type="SUPFAM" id="SSF54752">
    <property type="entry name" value="RecA protein, C-terminal domain"/>
    <property type="match status" value="1"/>
</dbReference>
<dbReference type="PROSITE" id="PS00321">
    <property type="entry name" value="RECA_1"/>
    <property type="match status" value="1"/>
</dbReference>
<dbReference type="PROSITE" id="PS50162">
    <property type="entry name" value="RECA_2"/>
    <property type="match status" value="1"/>
</dbReference>
<dbReference type="PROSITE" id="PS50163">
    <property type="entry name" value="RECA_3"/>
    <property type="match status" value="1"/>
</dbReference>
<accession>A7ZQC8</accession>
<comment type="function">
    <text evidence="1">Can catalyze the hydrolysis of ATP in the presence of single-stranded DNA, the ATP-dependent uptake of single-stranded DNA by duplex DNA, and the ATP-dependent hybridization of homologous single-stranded DNAs. It interacts with LexA causing its activation and leading to its autocatalytic cleavage.</text>
</comment>
<comment type="subcellular location">
    <subcellularLocation>
        <location evidence="1">Cytoplasm</location>
    </subcellularLocation>
</comment>
<comment type="similarity">
    <text evidence="1">Belongs to the RecA family.</text>
</comment>
<keyword id="KW-0067">ATP-binding</keyword>
<keyword id="KW-0963">Cytoplasm</keyword>
<keyword id="KW-0227">DNA damage</keyword>
<keyword id="KW-0233">DNA recombination</keyword>
<keyword id="KW-0234">DNA repair</keyword>
<keyword id="KW-0238">DNA-binding</keyword>
<keyword id="KW-0547">Nucleotide-binding</keyword>
<keyword id="KW-1185">Reference proteome</keyword>
<keyword id="KW-0742">SOS response</keyword>
<feature type="chain" id="PRO_1000059124" description="Protein RecA">
    <location>
        <begin position="1"/>
        <end position="353"/>
    </location>
</feature>
<feature type="region of interest" description="Disordered" evidence="2">
    <location>
        <begin position="330"/>
        <end position="353"/>
    </location>
</feature>
<feature type="compositionally biased region" description="Acidic residues" evidence="2">
    <location>
        <begin position="339"/>
        <end position="353"/>
    </location>
</feature>
<feature type="binding site" evidence="1">
    <location>
        <begin position="67"/>
        <end position="74"/>
    </location>
    <ligand>
        <name>ATP</name>
        <dbReference type="ChEBI" id="CHEBI:30616"/>
    </ligand>
</feature>
<protein>
    <recommendedName>
        <fullName evidence="1">Protein RecA</fullName>
    </recommendedName>
    <alternativeName>
        <fullName evidence="1">Recombinase A</fullName>
    </alternativeName>
</protein>
<gene>
    <name evidence="1" type="primary">recA</name>
    <name type="ordered locus">EcE24377A_2983</name>
</gene>
<evidence type="ECO:0000255" key="1">
    <source>
        <dbReference type="HAMAP-Rule" id="MF_00268"/>
    </source>
</evidence>
<evidence type="ECO:0000256" key="2">
    <source>
        <dbReference type="SAM" id="MobiDB-lite"/>
    </source>
</evidence>
<proteinExistence type="inferred from homology"/>
<reference key="1">
    <citation type="journal article" date="2008" name="J. Bacteriol.">
        <title>The pangenome structure of Escherichia coli: comparative genomic analysis of E. coli commensal and pathogenic isolates.</title>
        <authorList>
            <person name="Rasko D.A."/>
            <person name="Rosovitz M.J."/>
            <person name="Myers G.S.A."/>
            <person name="Mongodin E.F."/>
            <person name="Fricke W.F."/>
            <person name="Gajer P."/>
            <person name="Crabtree J."/>
            <person name="Sebaihia M."/>
            <person name="Thomson N.R."/>
            <person name="Chaudhuri R."/>
            <person name="Henderson I.R."/>
            <person name="Sperandio V."/>
            <person name="Ravel J."/>
        </authorList>
    </citation>
    <scope>NUCLEOTIDE SEQUENCE [LARGE SCALE GENOMIC DNA]</scope>
    <source>
        <strain>E24377A / ETEC</strain>
    </source>
</reference>
<sequence>MAIDENKQKALAAALGQIEKQFGKGSIMRLGEDRSMDVETISTGSLSLDIALGAGGLPMGRIVEIYGPESSGKTTLTLQVIAAAQREGKTCAFIDAEHALDPIYARKLGVDIDNLLCSQPDTGEQALEICDALARSGAVDVIVVDSVAALTPKAEIEGEIGDSHMGLAARMMSQAMRKLAGNLKQSNTLLIFINQIRMKIGVMFGNPETTTGGNALKFYASVRLDIRRIGAVKEGENVVGSETRVKVVKNKIAAPFKQAEFQILYGEGINFYGELVDLGVKEKLIEKAGAWYSYKGEKIGQGKANATAWLKDNPETAKEIEKKVRELLLSNPNSTPDFSVDDSEGVAETNEDF</sequence>
<organism>
    <name type="scientific">Escherichia coli O139:H28 (strain E24377A / ETEC)</name>
    <dbReference type="NCBI Taxonomy" id="331111"/>
    <lineage>
        <taxon>Bacteria</taxon>
        <taxon>Pseudomonadati</taxon>
        <taxon>Pseudomonadota</taxon>
        <taxon>Gammaproteobacteria</taxon>
        <taxon>Enterobacterales</taxon>
        <taxon>Enterobacteriaceae</taxon>
        <taxon>Escherichia</taxon>
    </lineage>
</organism>
<name>RECA_ECO24</name>